<evidence type="ECO:0000255" key="1">
    <source>
        <dbReference type="HAMAP-Rule" id="MF_01007"/>
    </source>
</evidence>
<gene>
    <name evidence="1" type="primary">rsmH</name>
    <name type="synonym">mraW</name>
    <name type="ordered locus">SNSL254_A0132</name>
</gene>
<sequence>MMENFKHTTVLLDEAVNGLNIRPDGIYIDGTFGRGGHSRLILSQLGEEGRLLAIDRDPQAIAVAQAINDPRFSIIHGPFSALADYVAERELTGKIDGILLDLGVSSPQLDDAERGFSFMRDGPLDMRMDPTRGQSAAEWLQTAEEADIAWVLKTFGEERFAKRIARAIVERNREQPMTRTKELAEVVAAATPVKDKFKHPATRTFQAVRIWVNSELEEIEQALKSSLSVLAPGGRLSIISFHSLEDRIVKRFMREQSRGPQVPAGLPMTEAQLKKLGGRELRALGKLMPGEKEVAENPRARSSVLRIAERTNA</sequence>
<keyword id="KW-0963">Cytoplasm</keyword>
<keyword id="KW-0489">Methyltransferase</keyword>
<keyword id="KW-0698">rRNA processing</keyword>
<keyword id="KW-0949">S-adenosyl-L-methionine</keyword>
<keyword id="KW-0808">Transferase</keyword>
<comment type="function">
    <text evidence="1">Specifically methylates the N4 position of cytidine in position 1402 (C1402) of 16S rRNA.</text>
</comment>
<comment type="catalytic activity">
    <reaction evidence="1">
        <text>cytidine(1402) in 16S rRNA + S-adenosyl-L-methionine = N(4)-methylcytidine(1402) in 16S rRNA + S-adenosyl-L-homocysteine + H(+)</text>
        <dbReference type="Rhea" id="RHEA:42928"/>
        <dbReference type="Rhea" id="RHEA-COMP:10286"/>
        <dbReference type="Rhea" id="RHEA-COMP:10287"/>
        <dbReference type="ChEBI" id="CHEBI:15378"/>
        <dbReference type="ChEBI" id="CHEBI:57856"/>
        <dbReference type="ChEBI" id="CHEBI:59789"/>
        <dbReference type="ChEBI" id="CHEBI:74506"/>
        <dbReference type="ChEBI" id="CHEBI:82748"/>
        <dbReference type="EC" id="2.1.1.199"/>
    </reaction>
</comment>
<comment type="subcellular location">
    <subcellularLocation>
        <location evidence="1">Cytoplasm</location>
    </subcellularLocation>
</comment>
<comment type="similarity">
    <text evidence="1">Belongs to the methyltransferase superfamily. RsmH family.</text>
</comment>
<reference key="1">
    <citation type="journal article" date="2011" name="J. Bacteriol.">
        <title>Comparative genomics of 28 Salmonella enterica isolates: evidence for CRISPR-mediated adaptive sublineage evolution.</title>
        <authorList>
            <person name="Fricke W.F."/>
            <person name="Mammel M.K."/>
            <person name="McDermott P.F."/>
            <person name="Tartera C."/>
            <person name="White D.G."/>
            <person name="Leclerc J.E."/>
            <person name="Ravel J."/>
            <person name="Cebula T.A."/>
        </authorList>
    </citation>
    <scope>NUCLEOTIDE SEQUENCE [LARGE SCALE GENOMIC DNA]</scope>
    <source>
        <strain>SL254</strain>
    </source>
</reference>
<feature type="chain" id="PRO_0000387103" description="Ribosomal RNA small subunit methyltransferase H">
    <location>
        <begin position="1"/>
        <end position="313"/>
    </location>
</feature>
<feature type="binding site" evidence="1">
    <location>
        <begin position="35"/>
        <end position="37"/>
    </location>
    <ligand>
        <name>S-adenosyl-L-methionine</name>
        <dbReference type="ChEBI" id="CHEBI:59789"/>
    </ligand>
</feature>
<feature type="binding site" evidence="1">
    <location>
        <position position="55"/>
    </location>
    <ligand>
        <name>S-adenosyl-L-methionine</name>
        <dbReference type="ChEBI" id="CHEBI:59789"/>
    </ligand>
</feature>
<feature type="binding site" evidence="1">
    <location>
        <position position="79"/>
    </location>
    <ligand>
        <name>S-adenosyl-L-methionine</name>
        <dbReference type="ChEBI" id="CHEBI:59789"/>
    </ligand>
</feature>
<feature type="binding site" evidence="1">
    <location>
        <position position="101"/>
    </location>
    <ligand>
        <name>S-adenosyl-L-methionine</name>
        <dbReference type="ChEBI" id="CHEBI:59789"/>
    </ligand>
</feature>
<feature type="binding site" evidence="1">
    <location>
        <position position="108"/>
    </location>
    <ligand>
        <name>S-adenosyl-L-methionine</name>
        <dbReference type="ChEBI" id="CHEBI:59789"/>
    </ligand>
</feature>
<name>RSMH_SALNS</name>
<proteinExistence type="inferred from homology"/>
<dbReference type="EC" id="2.1.1.199" evidence="1"/>
<dbReference type="EMBL" id="CP001113">
    <property type="protein sequence ID" value="ACF62078.1"/>
    <property type="molecule type" value="Genomic_DNA"/>
</dbReference>
<dbReference type="RefSeq" id="WP_000970433.1">
    <property type="nucleotide sequence ID" value="NZ_CCMR01000003.1"/>
</dbReference>
<dbReference type="SMR" id="B4SU42"/>
<dbReference type="KEGG" id="see:SNSL254_A0132"/>
<dbReference type="HOGENOM" id="CLU_038422_2_0_6"/>
<dbReference type="Proteomes" id="UP000008824">
    <property type="component" value="Chromosome"/>
</dbReference>
<dbReference type="GO" id="GO:0005737">
    <property type="term" value="C:cytoplasm"/>
    <property type="evidence" value="ECO:0007669"/>
    <property type="project" value="UniProtKB-SubCell"/>
</dbReference>
<dbReference type="GO" id="GO:0071424">
    <property type="term" value="F:rRNA (cytosine-N4-)-methyltransferase activity"/>
    <property type="evidence" value="ECO:0007669"/>
    <property type="project" value="UniProtKB-UniRule"/>
</dbReference>
<dbReference type="GO" id="GO:0070475">
    <property type="term" value="P:rRNA base methylation"/>
    <property type="evidence" value="ECO:0007669"/>
    <property type="project" value="UniProtKB-UniRule"/>
</dbReference>
<dbReference type="FunFam" id="1.10.150.170:FF:000001">
    <property type="entry name" value="Ribosomal RNA small subunit methyltransferase H"/>
    <property type="match status" value="1"/>
</dbReference>
<dbReference type="Gene3D" id="1.10.150.170">
    <property type="entry name" value="Putative methyltransferase TM0872, insert domain"/>
    <property type="match status" value="1"/>
</dbReference>
<dbReference type="Gene3D" id="3.40.50.150">
    <property type="entry name" value="Vaccinia Virus protein VP39"/>
    <property type="match status" value="1"/>
</dbReference>
<dbReference type="HAMAP" id="MF_01007">
    <property type="entry name" value="16SrRNA_methyltr_H"/>
    <property type="match status" value="1"/>
</dbReference>
<dbReference type="InterPro" id="IPR002903">
    <property type="entry name" value="RsmH"/>
</dbReference>
<dbReference type="InterPro" id="IPR023397">
    <property type="entry name" value="SAM-dep_MeTrfase_MraW_recog"/>
</dbReference>
<dbReference type="InterPro" id="IPR029063">
    <property type="entry name" value="SAM-dependent_MTases_sf"/>
</dbReference>
<dbReference type="NCBIfam" id="TIGR00006">
    <property type="entry name" value="16S rRNA (cytosine(1402)-N(4))-methyltransferase RsmH"/>
    <property type="match status" value="1"/>
</dbReference>
<dbReference type="PANTHER" id="PTHR11265:SF0">
    <property type="entry name" value="12S RRNA N4-METHYLCYTIDINE METHYLTRANSFERASE"/>
    <property type="match status" value="1"/>
</dbReference>
<dbReference type="PANTHER" id="PTHR11265">
    <property type="entry name" value="S-ADENOSYL-METHYLTRANSFERASE MRAW"/>
    <property type="match status" value="1"/>
</dbReference>
<dbReference type="Pfam" id="PF01795">
    <property type="entry name" value="Methyltransf_5"/>
    <property type="match status" value="1"/>
</dbReference>
<dbReference type="PIRSF" id="PIRSF004486">
    <property type="entry name" value="MraW"/>
    <property type="match status" value="1"/>
</dbReference>
<dbReference type="SUPFAM" id="SSF81799">
    <property type="entry name" value="Putative methyltransferase TM0872, insert domain"/>
    <property type="match status" value="1"/>
</dbReference>
<dbReference type="SUPFAM" id="SSF53335">
    <property type="entry name" value="S-adenosyl-L-methionine-dependent methyltransferases"/>
    <property type="match status" value="1"/>
</dbReference>
<organism>
    <name type="scientific">Salmonella newport (strain SL254)</name>
    <dbReference type="NCBI Taxonomy" id="423368"/>
    <lineage>
        <taxon>Bacteria</taxon>
        <taxon>Pseudomonadati</taxon>
        <taxon>Pseudomonadota</taxon>
        <taxon>Gammaproteobacteria</taxon>
        <taxon>Enterobacterales</taxon>
        <taxon>Enterobacteriaceae</taxon>
        <taxon>Salmonella</taxon>
    </lineage>
</organism>
<protein>
    <recommendedName>
        <fullName evidence="1">Ribosomal RNA small subunit methyltransferase H</fullName>
        <ecNumber evidence="1">2.1.1.199</ecNumber>
    </recommendedName>
    <alternativeName>
        <fullName evidence="1">16S rRNA m(4)C1402 methyltransferase</fullName>
    </alternativeName>
    <alternativeName>
        <fullName evidence="1">rRNA (cytosine-N(4)-)-methyltransferase RsmH</fullName>
    </alternativeName>
</protein>
<accession>B4SU42</accession>